<name>FABH_AZOPC</name>
<protein>
    <recommendedName>
        <fullName evidence="1">Beta-ketoacyl-[acyl-carrier-protein] synthase III</fullName>
        <shortName evidence="1">Beta-ketoacyl-ACP synthase III</shortName>
        <shortName evidence="1">KAS III</shortName>
        <ecNumber evidence="1">2.3.1.180</ecNumber>
    </recommendedName>
    <alternativeName>
        <fullName evidence="1">3-oxoacyl-[acyl-carrier-protein] synthase 3</fullName>
    </alternativeName>
    <alternativeName>
        <fullName evidence="1">3-oxoacyl-[acyl-carrier-protein] synthase III</fullName>
    </alternativeName>
</protein>
<feature type="chain" id="PRO_1000187840" description="Beta-ketoacyl-[acyl-carrier-protein] synthase III">
    <location>
        <begin position="1"/>
        <end position="333"/>
    </location>
</feature>
<feature type="region of interest" description="ACP-binding" evidence="1">
    <location>
        <begin position="258"/>
        <end position="262"/>
    </location>
</feature>
<feature type="active site" evidence="1">
    <location>
        <position position="117"/>
    </location>
</feature>
<feature type="active site" evidence="1">
    <location>
        <position position="257"/>
    </location>
</feature>
<feature type="active site" evidence="1">
    <location>
        <position position="287"/>
    </location>
</feature>
<gene>
    <name evidence="1" type="primary">fabH</name>
    <name type="ordered locus">CFPG_750</name>
</gene>
<keyword id="KW-0012">Acyltransferase</keyword>
<keyword id="KW-0963">Cytoplasm</keyword>
<keyword id="KW-0275">Fatty acid biosynthesis</keyword>
<keyword id="KW-0276">Fatty acid metabolism</keyword>
<keyword id="KW-0444">Lipid biosynthesis</keyword>
<keyword id="KW-0443">Lipid metabolism</keyword>
<keyword id="KW-0511">Multifunctional enzyme</keyword>
<keyword id="KW-1185">Reference proteome</keyword>
<keyword id="KW-0808">Transferase</keyword>
<evidence type="ECO:0000255" key="1">
    <source>
        <dbReference type="HAMAP-Rule" id="MF_01815"/>
    </source>
</evidence>
<reference key="1">
    <citation type="journal article" date="2008" name="Science">
        <title>Genome of an endosymbiont coupling N2 fixation to cellulolysis within RT protist cells in termite gut.</title>
        <authorList>
            <person name="Hongoh Y."/>
            <person name="Sharma V.K."/>
            <person name="Prakash T."/>
            <person name="Noda S."/>
            <person name="Toh H."/>
            <person name="Taylor T.D."/>
            <person name="Kudo T."/>
            <person name="Sakaki Y."/>
            <person name="Toyoda A."/>
            <person name="Hattori M."/>
            <person name="Ohkuma M."/>
        </authorList>
    </citation>
    <scope>NUCLEOTIDE SEQUENCE [LARGE SCALE GENOMIC DNA]</scope>
</reference>
<comment type="function">
    <text evidence="1">Catalyzes the condensation reaction of fatty acid synthesis by the addition to an acyl acceptor of two carbons from malonyl-ACP. Catalyzes the first condensation reaction which initiates fatty acid synthesis and may therefore play a role in governing the total rate of fatty acid production. Possesses both acetoacetyl-ACP synthase and acetyl transacylase activities. Its substrate specificity determines the biosynthesis of branched-chain and/or straight-chain of fatty acids.</text>
</comment>
<comment type="catalytic activity">
    <reaction evidence="1">
        <text>malonyl-[ACP] + acetyl-CoA + H(+) = 3-oxobutanoyl-[ACP] + CO2 + CoA</text>
        <dbReference type="Rhea" id="RHEA:12080"/>
        <dbReference type="Rhea" id="RHEA-COMP:9623"/>
        <dbReference type="Rhea" id="RHEA-COMP:9625"/>
        <dbReference type="ChEBI" id="CHEBI:15378"/>
        <dbReference type="ChEBI" id="CHEBI:16526"/>
        <dbReference type="ChEBI" id="CHEBI:57287"/>
        <dbReference type="ChEBI" id="CHEBI:57288"/>
        <dbReference type="ChEBI" id="CHEBI:78449"/>
        <dbReference type="ChEBI" id="CHEBI:78450"/>
        <dbReference type="EC" id="2.3.1.180"/>
    </reaction>
</comment>
<comment type="pathway">
    <text evidence="1">Lipid metabolism; fatty acid biosynthesis.</text>
</comment>
<comment type="subunit">
    <text evidence="1">Homodimer.</text>
</comment>
<comment type="subcellular location">
    <subcellularLocation>
        <location evidence="1">Cytoplasm</location>
    </subcellularLocation>
</comment>
<comment type="domain">
    <text evidence="1">The last Arg residue of the ACP-binding site is essential for the weak association between ACP/AcpP and FabH.</text>
</comment>
<comment type="similarity">
    <text evidence="1">Belongs to the thiolase-like superfamily. FabH family.</text>
</comment>
<sequence>MNKIHAVITGIGGYVPEYKLTNEEISTMVDTSDEWILKRIGIKERRILKPEEGKGITYLALKAIEDLKSRHDFDPLEIDAVLFATATPDYPFPNSASLIAHKVGITNAFGFDMEAACSGFIYALEVAQGFIVSGKHKKVMIIAGDVLSVFIDYSDRNTSPIFGDGCGCALVEATMEDIGLVDSIMRCDGSIPESLHVYGGGSVNPTTYETINNKLHYVWQDGKVVFRHAVSNMADTCQKLISKNNLSKDEIDWVVPHQANLRIIDAVTNHLKISRERVMINIEKYGNTGAASIPLCLCEWESKLHKGDKMIFTAFGAGFTWGATYLKWGYDSH</sequence>
<proteinExistence type="inferred from homology"/>
<dbReference type="EC" id="2.3.1.180" evidence="1"/>
<dbReference type="EMBL" id="AP010656">
    <property type="protein sequence ID" value="BAG84013.1"/>
    <property type="molecule type" value="Genomic_DNA"/>
</dbReference>
<dbReference type="RefSeq" id="WP_012573769.1">
    <property type="nucleotide sequence ID" value="NC_011565.1"/>
</dbReference>
<dbReference type="SMR" id="B6YS41"/>
<dbReference type="STRING" id="511995.CFPG_750"/>
<dbReference type="KEGG" id="aps:CFPG_750"/>
<dbReference type="eggNOG" id="COG0332">
    <property type="taxonomic scope" value="Bacteria"/>
</dbReference>
<dbReference type="HOGENOM" id="CLU_039592_3_1_10"/>
<dbReference type="OrthoDB" id="9815506at2"/>
<dbReference type="UniPathway" id="UPA00094"/>
<dbReference type="Proteomes" id="UP000000723">
    <property type="component" value="Chromosome"/>
</dbReference>
<dbReference type="GO" id="GO:0005737">
    <property type="term" value="C:cytoplasm"/>
    <property type="evidence" value="ECO:0007669"/>
    <property type="project" value="UniProtKB-SubCell"/>
</dbReference>
<dbReference type="GO" id="GO:0004315">
    <property type="term" value="F:3-oxoacyl-[acyl-carrier-protein] synthase activity"/>
    <property type="evidence" value="ECO:0007669"/>
    <property type="project" value="InterPro"/>
</dbReference>
<dbReference type="GO" id="GO:0033818">
    <property type="term" value="F:beta-ketoacyl-acyl-carrier-protein synthase III activity"/>
    <property type="evidence" value="ECO:0007669"/>
    <property type="project" value="UniProtKB-UniRule"/>
</dbReference>
<dbReference type="GO" id="GO:0006633">
    <property type="term" value="P:fatty acid biosynthetic process"/>
    <property type="evidence" value="ECO:0007669"/>
    <property type="project" value="UniProtKB-UniRule"/>
</dbReference>
<dbReference type="GO" id="GO:0044550">
    <property type="term" value="P:secondary metabolite biosynthetic process"/>
    <property type="evidence" value="ECO:0007669"/>
    <property type="project" value="TreeGrafter"/>
</dbReference>
<dbReference type="CDD" id="cd00830">
    <property type="entry name" value="KAS_III"/>
    <property type="match status" value="1"/>
</dbReference>
<dbReference type="FunFam" id="3.40.47.10:FF:000004">
    <property type="entry name" value="3-oxoacyl-[acyl-carrier-protein] synthase 3"/>
    <property type="match status" value="1"/>
</dbReference>
<dbReference type="Gene3D" id="3.40.47.10">
    <property type="match status" value="1"/>
</dbReference>
<dbReference type="HAMAP" id="MF_01815">
    <property type="entry name" value="FabH"/>
    <property type="match status" value="1"/>
</dbReference>
<dbReference type="InterPro" id="IPR013747">
    <property type="entry name" value="ACP_syn_III_C"/>
</dbReference>
<dbReference type="InterPro" id="IPR013751">
    <property type="entry name" value="ACP_syn_III_N"/>
</dbReference>
<dbReference type="InterPro" id="IPR004655">
    <property type="entry name" value="FabH"/>
</dbReference>
<dbReference type="InterPro" id="IPR016039">
    <property type="entry name" value="Thiolase-like"/>
</dbReference>
<dbReference type="NCBIfam" id="TIGR00747">
    <property type="entry name" value="fabH"/>
    <property type="match status" value="1"/>
</dbReference>
<dbReference type="NCBIfam" id="NF006829">
    <property type="entry name" value="PRK09352.1"/>
    <property type="match status" value="1"/>
</dbReference>
<dbReference type="PANTHER" id="PTHR34069">
    <property type="entry name" value="3-OXOACYL-[ACYL-CARRIER-PROTEIN] SYNTHASE 3"/>
    <property type="match status" value="1"/>
</dbReference>
<dbReference type="PANTHER" id="PTHR34069:SF2">
    <property type="entry name" value="BETA-KETOACYL-[ACYL-CARRIER-PROTEIN] SYNTHASE III"/>
    <property type="match status" value="1"/>
</dbReference>
<dbReference type="Pfam" id="PF08545">
    <property type="entry name" value="ACP_syn_III"/>
    <property type="match status" value="1"/>
</dbReference>
<dbReference type="Pfam" id="PF08541">
    <property type="entry name" value="ACP_syn_III_C"/>
    <property type="match status" value="1"/>
</dbReference>
<dbReference type="SUPFAM" id="SSF53901">
    <property type="entry name" value="Thiolase-like"/>
    <property type="match status" value="1"/>
</dbReference>
<accession>B6YS41</accession>
<organism>
    <name type="scientific">Azobacteroides pseudotrichonymphae genomovar. CFP2</name>
    <dbReference type="NCBI Taxonomy" id="511995"/>
    <lineage>
        <taxon>Bacteria</taxon>
        <taxon>Pseudomonadati</taxon>
        <taxon>Bacteroidota</taxon>
        <taxon>Bacteroidia</taxon>
        <taxon>Bacteroidales</taxon>
        <taxon>Candidatus Azobacteroides</taxon>
    </lineage>
</organism>